<keyword id="KW-0030">Aminoacyl-tRNA synthetase</keyword>
<keyword id="KW-0067">ATP-binding</keyword>
<keyword id="KW-0963">Cytoplasm</keyword>
<keyword id="KW-0436">Ligase</keyword>
<keyword id="KW-0547">Nucleotide-binding</keyword>
<keyword id="KW-0648">Protein biosynthesis</keyword>
<keyword id="KW-1185">Reference proteome</keyword>
<proteinExistence type="inferred from homology"/>
<sequence>MDTKLDPWSSSDITDYSKLFEEFGISPFENVLPEIPSPHMYMRRKVIFGHRDYEQIAEAMRTGAPFSVMDGFMPSGKVHLGHKMVMDQIVWHQEMGASAFVGIADREAFSVRGFSWQKCREIGVEEYILSLIALGFKPDGLIYFQSGCGSVKDLAFELGAKVNFSELSAIYGFSGETSLSHMLSVATQAADILQPQLEEFGGPKPVVVPVGPDQDPHLRLTRGLAGKMNMFRVEEREDVKTGRKYLSVRGKTAQKEALQELKKRIPGKVKLYEEHIDVLEYPDLAGLEKLVREVTVEFGGYAFIPPASTYHRFMSGLQGGKMSSSIPESQIALTDSPKEGAKKVKRAKTGGCVTLEEQKKLGGKPEECSVFELMLFHLIASDEELLEIKQECISGTRMCGSCKQLAAEKMQEFLKDHQEKRELAREHLDEYRIIYKD</sequence>
<evidence type="ECO:0000255" key="1">
    <source>
        <dbReference type="HAMAP-Rule" id="MF_00140"/>
    </source>
</evidence>
<dbReference type="EC" id="6.1.1.2" evidence="1"/>
<dbReference type="EMBL" id="AE010299">
    <property type="protein sequence ID" value="AAM03625.1"/>
    <property type="molecule type" value="Genomic_DNA"/>
</dbReference>
<dbReference type="RefSeq" id="WP_011020230.1">
    <property type="nucleotide sequence ID" value="NC_003552.1"/>
</dbReference>
<dbReference type="SMR" id="Q8TUA1"/>
<dbReference type="FunCoup" id="Q8TUA1">
    <property type="interactions" value="252"/>
</dbReference>
<dbReference type="STRING" id="188937.MA_0172"/>
<dbReference type="EnsemblBacteria" id="AAM03625">
    <property type="protein sequence ID" value="AAM03625"/>
    <property type="gene ID" value="MA_0172"/>
</dbReference>
<dbReference type="GeneID" id="1472064"/>
<dbReference type="KEGG" id="mac:MA_0172"/>
<dbReference type="HOGENOM" id="CLU_032621_3_0_2"/>
<dbReference type="InParanoid" id="Q8TUA1"/>
<dbReference type="OrthoDB" id="371821at2157"/>
<dbReference type="PhylomeDB" id="Q8TUA1"/>
<dbReference type="Proteomes" id="UP000002487">
    <property type="component" value="Chromosome"/>
</dbReference>
<dbReference type="GO" id="GO:0005737">
    <property type="term" value="C:cytoplasm"/>
    <property type="evidence" value="ECO:0000318"/>
    <property type="project" value="GO_Central"/>
</dbReference>
<dbReference type="GO" id="GO:0005524">
    <property type="term" value="F:ATP binding"/>
    <property type="evidence" value="ECO:0007669"/>
    <property type="project" value="UniProtKB-UniRule"/>
</dbReference>
<dbReference type="GO" id="GO:0004830">
    <property type="term" value="F:tryptophan-tRNA ligase activity"/>
    <property type="evidence" value="ECO:0000318"/>
    <property type="project" value="GO_Central"/>
</dbReference>
<dbReference type="GO" id="GO:0006436">
    <property type="term" value="P:tryptophanyl-tRNA aminoacylation"/>
    <property type="evidence" value="ECO:0000318"/>
    <property type="project" value="GO_Central"/>
</dbReference>
<dbReference type="CDD" id="cd00806">
    <property type="entry name" value="TrpRS_core"/>
    <property type="match status" value="1"/>
</dbReference>
<dbReference type="FunFam" id="1.10.240.10:FF:000007">
    <property type="entry name" value="Tryptophan--tRNA ligase"/>
    <property type="match status" value="1"/>
</dbReference>
<dbReference type="FunFam" id="3.40.50.620:FF:000207">
    <property type="entry name" value="Tryptophan--tRNA ligase"/>
    <property type="match status" value="1"/>
</dbReference>
<dbReference type="Gene3D" id="3.40.50.620">
    <property type="entry name" value="HUPs"/>
    <property type="match status" value="1"/>
</dbReference>
<dbReference type="Gene3D" id="1.10.240.10">
    <property type="entry name" value="Tyrosyl-Transfer RNA Synthetase"/>
    <property type="match status" value="1"/>
</dbReference>
<dbReference type="HAMAP" id="MF_00140_A">
    <property type="entry name" value="Trp_tRNA_synth_A"/>
    <property type="match status" value="1"/>
</dbReference>
<dbReference type="InterPro" id="IPR002305">
    <property type="entry name" value="aa-tRNA-synth_Ic"/>
</dbReference>
<dbReference type="InterPro" id="IPR014729">
    <property type="entry name" value="Rossmann-like_a/b/a_fold"/>
</dbReference>
<dbReference type="InterPro" id="IPR002306">
    <property type="entry name" value="Trp-tRNA-ligase"/>
</dbReference>
<dbReference type="InterPro" id="IPR020653">
    <property type="entry name" value="Tryptophan-tRNA-ligase_arc"/>
</dbReference>
<dbReference type="NCBIfam" id="NF008926">
    <property type="entry name" value="PRK12285.1-3"/>
    <property type="match status" value="1"/>
</dbReference>
<dbReference type="PANTHER" id="PTHR10055:SF5">
    <property type="entry name" value="TRYPTOPHAN--TRNA LIGASE"/>
    <property type="match status" value="1"/>
</dbReference>
<dbReference type="PANTHER" id="PTHR10055">
    <property type="entry name" value="TRYPTOPHANYL-TRNA SYNTHETASE"/>
    <property type="match status" value="1"/>
</dbReference>
<dbReference type="Pfam" id="PF00579">
    <property type="entry name" value="tRNA-synt_1b"/>
    <property type="match status" value="2"/>
</dbReference>
<dbReference type="PRINTS" id="PR01039">
    <property type="entry name" value="TRNASYNTHTRP"/>
</dbReference>
<dbReference type="SUPFAM" id="SSF52374">
    <property type="entry name" value="Nucleotidylyl transferase"/>
    <property type="match status" value="1"/>
</dbReference>
<reference key="1">
    <citation type="journal article" date="2002" name="Genome Res.">
        <title>The genome of Methanosarcina acetivorans reveals extensive metabolic and physiological diversity.</title>
        <authorList>
            <person name="Galagan J.E."/>
            <person name="Nusbaum C."/>
            <person name="Roy A."/>
            <person name="Endrizzi M.G."/>
            <person name="Macdonald P."/>
            <person name="FitzHugh W."/>
            <person name="Calvo S."/>
            <person name="Engels R."/>
            <person name="Smirnov S."/>
            <person name="Atnoor D."/>
            <person name="Brown A."/>
            <person name="Allen N."/>
            <person name="Naylor J."/>
            <person name="Stange-Thomann N."/>
            <person name="DeArellano K."/>
            <person name="Johnson R."/>
            <person name="Linton L."/>
            <person name="McEwan P."/>
            <person name="McKernan K."/>
            <person name="Talamas J."/>
            <person name="Tirrell A."/>
            <person name="Ye W."/>
            <person name="Zimmer A."/>
            <person name="Barber R.D."/>
            <person name="Cann I."/>
            <person name="Graham D.E."/>
            <person name="Grahame D.A."/>
            <person name="Guss A.M."/>
            <person name="Hedderich R."/>
            <person name="Ingram-Smith C."/>
            <person name="Kuettner H.C."/>
            <person name="Krzycki J.A."/>
            <person name="Leigh J.A."/>
            <person name="Li W."/>
            <person name="Liu J."/>
            <person name="Mukhopadhyay B."/>
            <person name="Reeve J.N."/>
            <person name="Smith K."/>
            <person name="Springer T.A."/>
            <person name="Umayam L.A."/>
            <person name="White O."/>
            <person name="White R.H."/>
            <person name="de Macario E.C."/>
            <person name="Ferry J.G."/>
            <person name="Jarrell K.F."/>
            <person name="Jing H."/>
            <person name="Macario A.J.L."/>
            <person name="Paulsen I.T."/>
            <person name="Pritchett M."/>
            <person name="Sowers K.R."/>
            <person name="Swanson R.V."/>
            <person name="Zinder S.H."/>
            <person name="Lander E."/>
            <person name="Metcalf W.W."/>
            <person name="Birren B."/>
        </authorList>
    </citation>
    <scope>NUCLEOTIDE SEQUENCE [LARGE SCALE GENOMIC DNA]</scope>
    <source>
        <strain>ATCC 35395 / DSM 2834 / JCM 12185 / C2A</strain>
    </source>
</reference>
<feature type="chain" id="PRO_0000136722" description="Tryptophan--tRNA ligase">
    <location>
        <begin position="1"/>
        <end position="437"/>
    </location>
</feature>
<feature type="short sequence motif" description="'HIGH' region">
    <location>
        <begin position="74"/>
        <end position="82"/>
    </location>
</feature>
<feature type="short sequence motif" description="'KMSKS' region">
    <location>
        <begin position="321"/>
        <end position="325"/>
    </location>
</feature>
<protein>
    <recommendedName>
        <fullName evidence="1">Tryptophan--tRNA ligase</fullName>
        <ecNumber evidence="1">6.1.1.2</ecNumber>
    </recommendedName>
    <alternativeName>
        <fullName evidence="1">Tryptophanyl-tRNA synthetase</fullName>
        <shortName evidence="1">TrpRS</shortName>
    </alternativeName>
</protein>
<organism>
    <name type="scientific">Methanosarcina acetivorans (strain ATCC 35395 / DSM 2834 / JCM 12185 / C2A)</name>
    <dbReference type="NCBI Taxonomy" id="188937"/>
    <lineage>
        <taxon>Archaea</taxon>
        <taxon>Methanobacteriati</taxon>
        <taxon>Methanobacteriota</taxon>
        <taxon>Stenosarchaea group</taxon>
        <taxon>Methanomicrobia</taxon>
        <taxon>Methanosarcinales</taxon>
        <taxon>Methanosarcinaceae</taxon>
        <taxon>Methanosarcina</taxon>
    </lineage>
</organism>
<gene>
    <name evidence="1" type="primary">trpS</name>
    <name type="ordered locus">MA_0172</name>
</gene>
<accession>Q8TUA1</accession>
<comment type="catalytic activity">
    <reaction evidence="1">
        <text>tRNA(Trp) + L-tryptophan + ATP = L-tryptophyl-tRNA(Trp) + AMP + diphosphate + H(+)</text>
        <dbReference type="Rhea" id="RHEA:24080"/>
        <dbReference type="Rhea" id="RHEA-COMP:9671"/>
        <dbReference type="Rhea" id="RHEA-COMP:9705"/>
        <dbReference type="ChEBI" id="CHEBI:15378"/>
        <dbReference type="ChEBI" id="CHEBI:30616"/>
        <dbReference type="ChEBI" id="CHEBI:33019"/>
        <dbReference type="ChEBI" id="CHEBI:57912"/>
        <dbReference type="ChEBI" id="CHEBI:78442"/>
        <dbReference type="ChEBI" id="CHEBI:78535"/>
        <dbReference type="ChEBI" id="CHEBI:456215"/>
        <dbReference type="EC" id="6.1.1.2"/>
    </reaction>
</comment>
<comment type="subcellular location">
    <subcellularLocation>
        <location evidence="1">Cytoplasm</location>
    </subcellularLocation>
</comment>
<comment type="similarity">
    <text evidence="1">Belongs to the class-I aminoacyl-tRNA synthetase family.</text>
</comment>
<name>SYW_METAC</name>